<feature type="chain" id="PRO_0000166101" description="Probable xanthine dehydrogenase subunit E">
    <location>
        <begin position="1"/>
        <end position="173"/>
    </location>
</feature>
<feature type="domain" description="2Fe-2S ferredoxin-type" evidence="2">
    <location>
        <begin position="14"/>
        <end position="90"/>
    </location>
</feature>
<feature type="binding site" evidence="2">
    <location>
        <position position="52"/>
    </location>
    <ligand>
        <name>[2Fe-2S] cluster</name>
        <dbReference type="ChEBI" id="CHEBI:190135"/>
        <label>1</label>
    </ligand>
</feature>
<feature type="binding site" evidence="2">
    <location>
        <position position="57"/>
    </location>
    <ligand>
        <name>[2Fe-2S] cluster</name>
        <dbReference type="ChEBI" id="CHEBI:190135"/>
        <label>1</label>
    </ligand>
</feature>
<feature type="binding site" evidence="2">
    <location>
        <position position="60"/>
    </location>
    <ligand>
        <name>[2Fe-2S] cluster</name>
        <dbReference type="ChEBI" id="CHEBI:190135"/>
        <label>1</label>
    </ligand>
</feature>
<feature type="binding site" evidence="2">
    <location>
        <position position="72"/>
    </location>
    <ligand>
        <name>[2Fe-2S] cluster</name>
        <dbReference type="ChEBI" id="CHEBI:190135"/>
        <label>1</label>
    </ligand>
</feature>
<feature type="binding site" evidence="2">
    <location>
        <position position="110"/>
    </location>
    <ligand>
        <name>[2Fe-2S] cluster</name>
        <dbReference type="ChEBI" id="CHEBI:190135"/>
        <label>2</label>
    </ligand>
</feature>
<feature type="binding site" evidence="2">
    <location>
        <position position="113"/>
    </location>
    <ligand>
        <name>[2Fe-2S] cluster</name>
        <dbReference type="ChEBI" id="CHEBI:190135"/>
        <label>2</label>
    </ligand>
</feature>
<feature type="binding site" evidence="2">
    <location>
        <position position="145"/>
    </location>
    <ligand>
        <name>[2Fe-2S] cluster</name>
        <dbReference type="ChEBI" id="CHEBI:190135"/>
        <label>2</label>
    </ligand>
</feature>
<feature type="binding site" evidence="2">
    <location>
        <position position="147"/>
    </location>
    <ligand>
        <name>[2Fe-2S] cluster</name>
        <dbReference type="ChEBI" id="CHEBI:190135"/>
        <label>2</label>
    </ligand>
</feature>
<accession>O32143</accession>
<comment type="function">
    <text evidence="3">Oxidizes hypoxanthine and xanthine to uric acid.</text>
</comment>
<comment type="catalytic activity">
    <reaction>
        <text>xanthine + NAD(+) + H2O = urate + NADH + H(+)</text>
        <dbReference type="Rhea" id="RHEA:16669"/>
        <dbReference type="ChEBI" id="CHEBI:15377"/>
        <dbReference type="ChEBI" id="CHEBI:15378"/>
        <dbReference type="ChEBI" id="CHEBI:17712"/>
        <dbReference type="ChEBI" id="CHEBI:17775"/>
        <dbReference type="ChEBI" id="CHEBI:57540"/>
        <dbReference type="ChEBI" id="CHEBI:57945"/>
        <dbReference type="EC" id="1.17.1.4"/>
    </reaction>
</comment>
<comment type="catalytic activity">
    <reaction>
        <text>hypoxanthine + NAD(+) + H2O = xanthine + NADH + H(+)</text>
        <dbReference type="Rhea" id="RHEA:24670"/>
        <dbReference type="ChEBI" id="CHEBI:15377"/>
        <dbReference type="ChEBI" id="CHEBI:15378"/>
        <dbReference type="ChEBI" id="CHEBI:17368"/>
        <dbReference type="ChEBI" id="CHEBI:17712"/>
        <dbReference type="ChEBI" id="CHEBI:57540"/>
        <dbReference type="ChEBI" id="CHEBI:57945"/>
        <dbReference type="EC" id="1.17.1.4"/>
    </reaction>
</comment>
<comment type="cofactor">
    <cofactor evidence="1">
        <name>[2Fe-2S] cluster</name>
        <dbReference type="ChEBI" id="CHEBI:190135"/>
    </cofactor>
    <text evidence="1">Binds 2 [2Fe-2S] clusters.</text>
</comment>
<comment type="pathway">
    <text>Purine metabolism; hypoxanthine degradation; urate from hypoxanthine: step 1/2.</text>
</comment>
<comment type="pathway">
    <text>Purine metabolism; hypoxanthine degradation; urate from hypoxanthine: step 2/2.</text>
</comment>
<comment type="subunit">
    <text>Could be composed of four subunits: PucA, PucC, PucD and PucE.</text>
</comment>
<comment type="induction">
    <text>Expression is very low in excess nitrogen (glutamate plus ammonia) and is induced during limiting-nitrogen conditions (glutamate). Expression decreases when allantoin is added during limiting-nitrogen conditions.</text>
</comment>
<gene>
    <name type="primary">pucE</name>
    <name type="synonym">yurB</name>
    <name type="ordered locus">BSU32470</name>
</gene>
<name>XDHE_BACSU</name>
<keyword id="KW-0001">2Fe-2S</keyword>
<keyword id="KW-0408">Iron</keyword>
<keyword id="KW-0411">Iron-sulfur</keyword>
<keyword id="KW-0479">Metal-binding</keyword>
<keyword id="KW-0520">NAD</keyword>
<keyword id="KW-0560">Oxidoreductase</keyword>
<keyword id="KW-0659">Purine metabolism</keyword>
<keyword id="KW-1185">Reference proteome</keyword>
<evidence type="ECO:0000250" key="1"/>
<evidence type="ECO:0000255" key="2">
    <source>
        <dbReference type="PROSITE-ProRule" id="PRU00465"/>
    </source>
</evidence>
<evidence type="ECO:0000269" key="3">
    <source>
    </source>
</evidence>
<reference key="1">
    <citation type="journal article" date="1997" name="Nature">
        <title>The complete genome sequence of the Gram-positive bacterium Bacillus subtilis.</title>
        <authorList>
            <person name="Kunst F."/>
            <person name="Ogasawara N."/>
            <person name="Moszer I."/>
            <person name="Albertini A.M."/>
            <person name="Alloni G."/>
            <person name="Azevedo V."/>
            <person name="Bertero M.G."/>
            <person name="Bessieres P."/>
            <person name="Bolotin A."/>
            <person name="Borchert S."/>
            <person name="Borriss R."/>
            <person name="Boursier L."/>
            <person name="Brans A."/>
            <person name="Braun M."/>
            <person name="Brignell S.C."/>
            <person name="Bron S."/>
            <person name="Brouillet S."/>
            <person name="Bruschi C.V."/>
            <person name="Caldwell B."/>
            <person name="Capuano V."/>
            <person name="Carter N.M."/>
            <person name="Choi S.-K."/>
            <person name="Codani J.-J."/>
            <person name="Connerton I.F."/>
            <person name="Cummings N.J."/>
            <person name="Daniel R.A."/>
            <person name="Denizot F."/>
            <person name="Devine K.M."/>
            <person name="Duesterhoeft A."/>
            <person name="Ehrlich S.D."/>
            <person name="Emmerson P.T."/>
            <person name="Entian K.-D."/>
            <person name="Errington J."/>
            <person name="Fabret C."/>
            <person name="Ferrari E."/>
            <person name="Foulger D."/>
            <person name="Fritz C."/>
            <person name="Fujita M."/>
            <person name="Fujita Y."/>
            <person name="Fuma S."/>
            <person name="Galizzi A."/>
            <person name="Galleron N."/>
            <person name="Ghim S.-Y."/>
            <person name="Glaser P."/>
            <person name="Goffeau A."/>
            <person name="Golightly E.J."/>
            <person name="Grandi G."/>
            <person name="Guiseppi G."/>
            <person name="Guy B.J."/>
            <person name="Haga K."/>
            <person name="Haiech J."/>
            <person name="Harwood C.R."/>
            <person name="Henaut A."/>
            <person name="Hilbert H."/>
            <person name="Holsappel S."/>
            <person name="Hosono S."/>
            <person name="Hullo M.-F."/>
            <person name="Itaya M."/>
            <person name="Jones L.-M."/>
            <person name="Joris B."/>
            <person name="Karamata D."/>
            <person name="Kasahara Y."/>
            <person name="Klaerr-Blanchard M."/>
            <person name="Klein C."/>
            <person name="Kobayashi Y."/>
            <person name="Koetter P."/>
            <person name="Koningstein G."/>
            <person name="Krogh S."/>
            <person name="Kumano M."/>
            <person name="Kurita K."/>
            <person name="Lapidus A."/>
            <person name="Lardinois S."/>
            <person name="Lauber J."/>
            <person name="Lazarevic V."/>
            <person name="Lee S.-M."/>
            <person name="Levine A."/>
            <person name="Liu H."/>
            <person name="Masuda S."/>
            <person name="Mauel C."/>
            <person name="Medigue C."/>
            <person name="Medina N."/>
            <person name="Mellado R.P."/>
            <person name="Mizuno M."/>
            <person name="Moestl D."/>
            <person name="Nakai S."/>
            <person name="Noback M."/>
            <person name="Noone D."/>
            <person name="O'Reilly M."/>
            <person name="Ogawa K."/>
            <person name="Ogiwara A."/>
            <person name="Oudega B."/>
            <person name="Park S.-H."/>
            <person name="Parro V."/>
            <person name="Pohl T.M."/>
            <person name="Portetelle D."/>
            <person name="Porwollik S."/>
            <person name="Prescott A.M."/>
            <person name="Presecan E."/>
            <person name="Pujic P."/>
            <person name="Purnelle B."/>
            <person name="Rapoport G."/>
            <person name="Rey M."/>
            <person name="Reynolds S."/>
            <person name="Rieger M."/>
            <person name="Rivolta C."/>
            <person name="Rocha E."/>
            <person name="Roche B."/>
            <person name="Rose M."/>
            <person name="Sadaie Y."/>
            <person name="Sato T."/>
            <person name="Scanlan E."/>
            <person name="Schleich S."/>
            <person name="Schroeter R."/>
            <person name="Scoffone F."/>
            <person name="Sekiguchi J."/>
            <person name="Sekowska A."/>
            <person name="Seror S.J."/>
            <person name="Serror P."/>
            <person name="Shin B.-S."/>
            <person name="Soldo B."/>
            <person name="Sorokin A."/>
            <person name="Tacconi E."/>
            <person name="Takagi T."/>
            <person name="Takahashi H."/>
            <person name="Takemaru K."/>
            <person name="Takeuchi M."/>
            <person name="Tamakoshi A."/>
            <person name="Tanaka T."/>
            <person name="Terpstra P."/>
            <person name="Tognoni A."/>
            <person name="Tosato V."/>
            <person name="Uchiyama S."/>
            <person name="Vandenbol M."/>
            <person name="Vannier F."/>
            <person name="Vassarotti A."/>
            <person name="Viari A."/>
            <person name="Wambutt R."/>
            <person name="Wedler E."/>
            <person name="Wedler H."/>
            <person name="Weitzenegger T."/>
            <person name="Winters P."/>
            <person name="Wipat A."/>
            <person name="Yamamoto H."/>
            <person name="Yamane K."/>
            <person name="Yasumoto K."/>
            <person name="Yata K."/>
            <person name="Yoshida K."/>
            <person name="Yoshikawa H.-F."/>
            <person name="Zumstein E."/>
            <person name="Yoshikawa H."/>
            <person name="Danchin A."/>
        </authorList>
    </citation>
    <scope>NUCLEOTIDE SEQUENCE [LARGE SCALE GENOMIC DNA]</scope>
    <source>
        <strain>168</strain>
    </source>
</reference>
<reference key="2">
    <citation type="journal article" date="2001" name="J. Bacteriol.">
        <title>Functional analysis of 14 genes that constitute the purine catabolic pathway in Bacillus subtilis and evidence for a novel regulon controlled by the PucR transcription activator.</title>
        <authorList>
            <person name="Schultz A.C."/>
            <person name="Nygaard P."/>
            <person name="Saxild H.H."/>
        </authorList>
    </citation>
    <scope>FUNCTION</scope>
    <source>
        <strain>168</strain>
    </source>
</reference>
<organism>
    <name type="scientific">Bacillus subtilis (strain 168)</name>
    <dbReference type="NCBI Taxonomy" id="224308"/>
    <lineage>
        <taxon>Bacteria</taxon>
        <taxon>Bacillati</taxon>
        <taxon>Bacillota</taxon>
        <taxon>Bacilli</taxon>
        <taxon>Bacillales</taxon>
        <taxon>Bacillaceae</taxon>
        <taxon>Bacillus</taxon>
    </lineage>
</organism>
<sequence length="173" mass="18838">MDIKEAGPFPVKKEQFRMTVNGQAWEVAAVPTTHLSDLLRKEFQLTGTKVSCGIGRCGACSILIDGKLANACMTMAYQADGHSITTIEGLQKEELDMCQTAFLEEGGFQCGYCTPGMIIALKALFRETPQPSDKDIEEGLAGNLCRCTGYGGIMRSACRIRRELNGGRRESGF</sequence>
<dbReference type="EC" id="1.17.1.4"/>
<dbReference type="EMBL" id="AL009126">
    <property type="protein sequence ID" value="CAB15237.1"/>
    <property type="molecule type" value="Genomic_DNA"/>
</dbReference>
<dbReference type="PIR" id="A70017">
    <property type="entry name" value="A70017"/>
</dbReference>
<dbReference type="RefSeq" id="NP_391127.1">
    <property type="nucleotide sequence ID" value="NC_000964.3"/>
</dbReference>
<dbReference type="RefSeq" id="WP_003243276.1">
    <property type="nucleotide sequence ID" value="NZ_OZ025638.1"/>
</dbReference>
<dbReference type="SMR" id="O32143"/>
<dbReference type="FunCoup" id="O32143">
    <property type="interactions" value="320"/>
</dbReference>
<dbReference type="STRING" id="224308.BSU32470"/>
<dbReference type="PaxDb" id="224308-BSU32470"/>
<dbReference type="EnsemblBacteria" id="CAB15237">
    <property type="protein sequence ID" value="CAB15237"/>
    <property type="gene ID" value="BSU_32470"/>
</dbReference>
<dbReference type="GeneID" id="936680"/>
<dbReference type="KEGG" id="bsu:BSU32470"/>
<dbReference type="PATRIC" id="fig|224308.179.peg.3516"/>
<dbReference type="eggNOG" id="COG2080">
    <property type="taxonomic scope" value="Bacteria"/>
</dbReference>
<dbReference type="InParanoid" id="O32143"/>
<dbReference type="OrthoDB" id="9796880at2"/>
<dbReference type="PhylomeDB" id="O32143"/>
<dbReference type="BioCyc" id="BSUB:BSU32470-MONOMER"/>
<dbReference type="UniPathway" id="UPA00604">
    <property type="reaction ID" value="UER00661"/>
</dbReference>
<dbReference type="UniPathway" id="UPA00604">
    <property type="reaction ID" value="UER00662"/>
</dbReference>
<dbReference type="Proteomes" id="UP000001570">
    <property type="component" value="Chromosome"/>
</dbReference>
<dbReference type="GO" id="GO:0051537">
    <property type="term" value="F:2 iron, 2 sulfur cluster binding"/>
    <property type="evidence" value="ECO:0007669"/>
    <property type="project" value="UniProtKB-KW"/>
</dbReference>
<dbReference type="GO" id="GO:0046872">
    <property type="term" value="F:metal ion binding"/>
    <property type="evidence" value="ECO:0007669"/>
    <property type="project" value="UniProtKB-KW"/>
</dbReference>
<dbReference type="GO" id="GO:0004854">
    <property type="term" value="F:xanthine dehydrogenase activity"/>
    <property type="evidence" value="ECO:0007669"/>
    <property type="project" value="UniProtKB-EC"/>
</dbReference>
<dbReference type="GO" id="GO:0009114">
    <property type="term" value="P:hypoxanthine catabolic process"/>
    <property type="evidence" value="ECO:0007669"/>
    <property type="project" value="UniProtKB-UniPathway"/>
</dbReference>
<dbReference type="Gene3D" id="3.10.20.30">
    <property type="match status" value="1"/>
</dbReference>
<dbReference type="Gene3D" id="1.10.150.120">
    <property type="entry name" value="[2Fe-2S]-binding domain"/>
    <property type="match status" value="1"/>
</dbReference>
<dbReference type="InterPro" id="IPR002888">
    <property type="entry name" value="2Fe-2S-bd"/>
</dbReference>
<dbReference type="InterPro" id="IPR036884">
    <property type="entry name" value="2Fe-2S-bd_dom_sf"/>
</dbReference>
<dbReference type="InterPro" id="IPR036010">
    <property type="entry name" value="2Fe-2S_ferredoxin-like_sf"/>
</dbReference>
<dbReference type="InterPro" id="IPR001041">
    <property type="entry name" value="2Fe-2S_ferredoxin-type"/>
</dbReference>
<dbReference type="InterPro" id="IPR006058">
    <property type="entry name" value="2Fe2S_fd_BS"/>
</dbReference>
<dbReference type="InterPro" id="IPR012675">
    <property type="entry name" value="Beta-grasp_dom_sf"/>
</dbReference>
<dbReference type="InterPro" id="IPR051452">
    <property type="entry name" value="Diverse_Oxidoreductases"/>
</dbReference>
<dbReference type="InterPro" id="IPR017611">
    <property type="entry name" value="Xanthine_dehydrogenase_esu"/>
</dbReference>
<dbReference type="NCBIfam" id="TIGR03198">
    <property type="entry name" value="pucE"/>
    <property type="match status" value="1"/>
</dbReference>
<dbReference type="PANTHER" id="PTHR44379">
    <property type="entry name" value="OXIDOREDUCTASE WITH IRON-SULFUR SUBUNIT"/>
    <property type="match status" value="1"/>
</dbReference>
<dbReference type="PANTHER" id="PTHR44379:SF7">
    <property type="entry name" value="XANTHINE DEHYDROGENASE SUBUNIT E-RELATED"/>
    <property type="match status" value="1"/>
</dbReference>
<dbReference type="Pfam" id="PF00111">
    <property type="entry name" value="Fer2"/>
    <property type="match status" value="1"/>
</dbReference>
<dbReference type="Pfam" id="PF01799">
    <property type="entry name" value="Fer2_2"/>
    <property type="match status" value="1"/>
</dbReference>
<dbReference type="SUPFAM" id="SSF54292">
    <property type="entry name" value="2Fe-2S ferredoxin-like"/>
    <property type="match status" value="1"/>
</dbReference>
<dbReference type="SUPFAM" id="SSF47741">
    <property type="entry name" value="CO dehydrogenase ISP C-domain like"/>
    <property type="match status" value="1"/>
</dbReference>
<dbReference type="PROSITE" id="PS00197">
    <property type="entry name" value="2FE2S_FER_1"/>
    <property type="match status" value="1"/>
</dbReference>
<dbReference type="PROSITE" id="PS51085">
    <property type="entry name" value="2FE2S_FER_2"/>
    <property type="match status" value="1"/>
</dbReference>
<proteinExistence type="evidence at transcript level"/>
<protein>
    <recommendedName>
        <fullName>Probable xanthine dehydrogenase subunit E</fullName>
        <shortName>XDHase subunit E</shortName>
        <ecNumber>1.17.1.4</ecNumber>
    </recommendedName>
</protein>